<feature type="signal peptide" evidence="1">
    <location>
        <begin position="1"/>
        <end position="22"/>
    </location>
</feature>
<feature type="chain" id="PRO_0000045047" description="Interleukin-12 subunit beta">
    <location>
        <begin position="23"/>
        <end position="327"/>
    </location>
</feature>
<feature type="domain" description="Ig-like C2-type">
    <location>
        <begin position="23"/>
        <end position="106"/>
    </location>
</feature>
<feature type="domain" description="Fibronectin type-III" evidence="6">
    <location>
        <begin position="238"/>
        <end position="327"/>
    </location>
</feature>
<feature type="glycosylation site" description="N-linked (GlcNAc...) asparagine" evidence="4">
    <location>
        <position position="125"/>
    </location>
</feature>
<feature type="glycosylation site" description="N-linked (GlcNAc...) asparagine" evidence="4">
    <location>
        <position position="135"/>
    </location>
</feature>
<feature type="glycosylation site" description="N-linked (GlcNAc...) asparagine" evidence="4">
    <location>
        <position position="223"/>
    </location>
</feature>
<feature type="glycosylation site" description="N-linked (GlcNAc...) asparagine" evidence="4">
    <location>
        <position position="315"/>
    </location>
</feature>
<feature type="disulfide bond" evidence="5">
    <location>
        <begin position="50"/>
        <end position="90"/>
    </location>
</feature>
<feature type="disulfide bond" description="Interchain" evidence="5">
    <location>
        <position position="200"/>
    </location>
</feature>
<name>IL12B_MESAU</name>
<organism>
    <name type="scientific">Mesocricetus auratus</name>
    <name type="common">Golden hamster</name>
    <dbReference type="NCBI Taxonomy" id="10036"/>
    <lineage>
        <taxon>Eukaryota</taxon>
        <taxon>Metazoa</taxon>
        <taxon>Chordata</taxon>
        <taxon>Craniata</taxon>
        <taxon>Vertebrata</taxon>
        <taxon>Euteleostomi</taxon>
        <taxon>Mammalia</taxon>
        <taxon>Eutheria</taxon>
        <taxon>Euarchontoglires</taxon>
        <taxon>Glires</taxon>
        <taxon>Rodentia</taxon>
        <taxon>Myomorpha</taxon>
        <taxon>Muroidea</taxon>
        <taxon>Cricetidae</taxon>
        <taxon>Cricetinae</taxon>
        <taxon>Mesocricetus</taxon>
    </lineage>
</organism>
<proteinExistence type="evidence at transcript level"/>
<comment type="function">
    <text evidence="1">Cytokine that can act as a growth factor for activated T and NK cells, enhance the lytic activity of NK/lymphokine-activated killer cells, and stimulate the production of IFN-gamma by resting PBMC.</text>
</comment>
<comment type="function">
    <text evidence="1">Associates with IL23A to form the IL-23 interleukin, a heterodimeric cytokine which functions in innate and adaptive immunity. IL-23 may constitute with IL-17 an acute response to infection in peripheral tissues. IL-23 binds to a heterodimeric receptor complex composed of IL12RB1 and IL23R, activates the Jak-Stat signaling cascade, stimulates memory rather than naive T-cells and promotes production of pro-inflammatory cytokines. IL-23 induces autoimmune inflammation and thus may be responsible for autoimmune inflammatory diseases and may be important for tumorigenesis (By similarity).</text>
</comment>
<comment type="subunit">
    <text evidence="2 3">Heterodimer with IL12A; disulfide-linked. The heterodimer is known as interleukin IL-12. Heterodimer with IL23A; disulfide-linked. The heterodimer is known as interleukin IL-23. Also secreted as a monomer. Interacts with NBR1; this interaction promotes IL-12 secretion (By similarity).</text>
</comment>
<comment type="subcellular location">
    <subcellularLocation>
        <location>Secreted</location>
    </subcellularLocation>
</comment>
<comment type="similarity">
    <text evidence="7">Belongs to the IL-12B family.</text>
</comment>
<sequence>MCHQKLTISWFAVVLLASPLMAIWELEKDVYVVEVDWSPDAAGERVVLTCDTSEEDDIIWTSDKNSEAVGSGKTLTIQVKEFSNAGQYTCHKGGKTLSHSRLLLHKKENGIWSTDILKDQKDPKNKTFLKCEAANYSGRFTCWWLTAISTDLKFNVKSSSSSSDSRAVTCGAASLSAEKVTVDRKDYQKYSVACQEDITCPTAEETLPIGLVMEAQHKYKYENYSTGFFIRDIIKPDPPKNLQLKPLRGSQMELSWEYPDSWSTPHSYFSLKFHVQVHRKRERKDESQFVDKTSATIRCSKGAEVRVRAQDHYYNSSWSRWVSVPCS</sequence>
<evidence type="ECO:0000250" key="1"/>
<evidence type="ECO:0000250" key="2">
    <source>
        <dbReference type="UniProtKB" id="P29460"/>
    </source>
</evidence>
<evidence type="ECO:0000250" key="3">
    <source>
        <dbReference type="UniProtKB" id="P43432"/>
    </source>
</evidence>
<evidence type="ECO:0000255" key="4"/>
<evidence type="ECO:0000255" key="5">
    <source>
        <dbReference type="PROSITE-ProRule" id="PRU00114"/>
    </source>
</evidence>
<evidence type="ECO:0000255" key="6">
    <source>
        <dbReference type="PROSITE-ProRule" id="PRU00316"/>
    </source>
</evidence>
<evidence type="ECO:0000305" key="7"/>
<dbReference type="EMBL" id="AB085792">
    <property type="protein sequence ID" value="BAC24798.1"/>
    <property type="molecule type" value="mRNA"/>
</dbReference>
<dbReference type="RefSeq" id="NP_001268618.1">
    <property type="nucleotide sequence ID" value="NM_001281689.1"/>
</dbReference>
<dbReference type="SMR" id="Q8CJE6"/>
<dbReference type="STRING" id="10036.ENSMAUP00000010247"/>
<dbReference type="GlyCosmos" id="Q8CJE6">
    <property type="glycosylation" value="4 sites, No reported glycans"/>
</dbReference>
<dbReference type="GeneID" id="101843678"/>
<dbReference type="KEGG" id="maua:101843678"/>
<dbReference type="CTD" id="3593"/>
<dbReference type="eggNOG" id="ENOG502RZMA">
    <property type="taxonomic scope" value="Eukaryota"/>
</dbReference>
<dbReference type="OrthoDB" id="8670716at2759"/>
<dbReference type="Proteomes" id="UP000189706">
    <property type="component" value="Unplaced"/>
</dbReference>
<dbReference type="GO" id="GO:0005615">
    <property type="term" value="C:extracellular space"/>
    <property type="evidence" value="ECO:0007669"/>
    <property type="project" value="UniProtKB-KW"/>
</dbReference>
<dbReference type="GO" id="GO:0016020">
    <property type="term" value="C:membrane"/>
    <property type="evidence" value="ECO:0007669"/>
    <property type="project" value="InterPro"/>
</dbReference>
<dbReference type="GO" id="GO:0005125">
    <property type="term" value="F:cytokine activity"/>
    <property type="evidence" value="ECO:0007669"/>
    <property type="project" value="UniProtKB-KW"/>
</dbReference>
<dbReference type="GO" id="GO:0004896">
    <property type="term" value="F:cytokine receptor activity"/>
    <property type="evidence" value="ECO:0007669"/>
    <property type="project" value="InterPro"/>
</dbReference>
<dbReference type="CDD" id="cd00063">
    <property type="entry name" value="FN3"/>
    <property type="match status" value="1"/>
</dbReference>
<dbReference type="FunFam" id="2.60.40.10:FF:000959">
    <property type="entry name" value="Interleukin-12 subunit beta"/>
    <property type="match status" value="1"/>
</dbReference>
<dbReference type="FunFam" id="2.60.40.10:FF:001008">
    <property type="entry name" value="Interleukin-12 subunit beta"/>
    <property type="match status" value="1"/>
</dbReference>
<dbReference type="Gene3D" id="2.60.40.10">
    <property type="entry name" value="Immunoglobulins"/>
    <property type="match status" value="3"/>
</dbReference>
<dbReference type="InterPro" id="IPR003961">
    <property type="entry name" value="FN3_dom"/>
</dbReference>
<dbReference type="InterPro" id="IPR036116">
    <property type="entry name" value="FN3_sf"/>
</dbReference>
<dbReference type="InterPro" id="IPR003530">
    <property type="entry name" value="Hematopoietin_rcpt_L_F3_CS"/>
</dbReference>
<dbReference type="InterPro" id="IPR007110">
    <property type="entry name" value="Ig-like_dom"/>
</dbReference>
<dbReference type="InterPro" id="IPR036179">
    <property type="entry name" value="Ig-like_dom_sf"/>
</dbReference>
<dbReference type="InterPro" id="IPR013783">
    <property type="entry name" value="Ig-like_fold"/>
</dbReference>
<dbReference type="InterPro" id="IPR003598">
    <property type="entry name" value="Ig_sub2"/>
</dbReference>
<dbReference type="InterPro" id="IPR050676">
    <property type="entry name" value="IL-12"/>
</dbReference>
<dbReference type="InterPro" id="IPR015528">
    <property type="entry name" value="IL-12_beta"/>
</dbReference>
<dbReference type="InterPro" id="IPR019482">
    <property type="entry name" value="IL-12_beta_cen-dom"/>
</dbReference>
<dbReference type="PANTHER" id="PTHR48485:SF4">
    <property type="entry name" value="INTERLEUKIN-12 SUBUNIT BETA"/>
    <property type="match status" value="1"/>
</dbReference>
<dbReference type="PANTHER" id="PTHR48485">
    <property type="entry name" value="INTERLEUKIN-12 SUBUNIT BETA-RELATED"/>
    <property type="match status" value="1"/>
</dbReference>
<dbReference type="Pfam" id="PF16681">
    <property type="entry name" value="Ig_5"/>
    <property type="match status" value="1"/>
</dbReference>
<dbReference type="Pfam" id="PF10420">
    <property type="entry name" value="IL12p40_C"/>
    <property type="match status" value="1"/>
</dbReference>
<dbReference type="PIRSF" id="PIRSF038007">
    <property type="entry name" value="IL_12_beta"/>
    <property type="match status" value="1"/>
</dbReference>
<dbReference type="PRINTS" id="PR01928">
    <property type="entry name" value="INTRLEUKN12B"/>
</dbReference>
<dbReference type="SMART" id="SM00408">
    <property type="entry name" value="IGc2"/>
    <property type="match status" value="1"/>
</dbReference>
<dbReference type="SUPFAM" id="SSF49265">
    <property type="entry name" value="Fibronectin type III"/>
    <property type="match status" value="2"/>
</dbReference>
<dbReference type="SUPFAM" id="SSF48726">
    <property type="entry name" value="Immunoglobulin"/>
    <property type="match status" value="1"/>
</dbReference>
<dbReference type="PROSITE" id="PS50853">
    <property type="entry name" value="FN3"/>
    <property type="match status" value="1"/>
</dbReference>
<dbReference type="PROSITE" id="PS01354">
    <property type="entry name" value="HEMATOPO_REC_L_F3"/>
    <property type="match status" value="1"/>
</dbReference>
<dbReference type="PROSITE" id="PS50835">
    <property type="entry name" value="IG_LIKE"/>
    <property type="match status" value="1"/>
</dbReference>
<reference key="1">
    <citation type="journal article" date="2003" name="Mol. Immunol.">
        <title>Structure and characterization of hamster IL-12 p35 and p40.</title>
        <authorList>
            <person name="Maruyama K."/>
            <person name="Takigawa Y."/>
            <person name="Akiyama Y."/>
            <person name="Hojo T."/>
            <person name="Nara-Ashizawa N."/>
            <person name="Cheng J."/>
            <person name="Watanabe M."/>
            <person name="Yamaguchi K."/>
        </authorList>
    </citation>
    <scope>NUCLEOTIDE SEQUENCE [MRNA]</scope>
    <source>
        <tissue>Bone marrow</tissue>
    </source>
</reference>
<gene>
    <name type="primary">IL12B</name>
</gene>
<keyword id="KW-0202">Cytokine</keyword>
<keyword id="KW-1015">Disulfide bond</keyword>
<keyword id="KW-0325">Glycoprotein</keyword>
<keyword id="KW-0393">Immunoglobulin domain</keyword>
<keyword id="KW-1185">Reference proteome</keyword>
<keyword id="KW-0964">Secreted</keyword>
<keyword id="KW-0732">Signal</keyword>
<accession>Q8CJE6</accession>
<protein>
    <recommendedName>
        <fullName>Interleukin-12 subunit beta</fullName>
        <shortName>IL-12B</shortName>
    </recommendedName>
    <alternativeName>
        <fullName>Cytotoxic lymphocyte maturation factor 40 kDa subunit</fullName>
        <shortName>CLMF p40</shortName>
    </alternativeName>
    <alternativeName>
        <fullName>IL-12 subunit p40</fullName>
    </alternativeName>
</protein>